<dbReference type="EC" id="6.1.1.20" evidence="1"/>
<dbReference type="EMBL" id="BX548175">
    <property type="protein sequence ID" value="CAE20913.1"/>
    <property type="molecule type" value="Genomic_DNA"/>
</dbReference>
<dbReference type="RefSeq" id="WP_011130116.1">
    <property type="nucleotide sequence ID" value="NC_005071.1"/>
</dbReference>
<dbReference type="SMR" id="Q7V7K5"/>
<dbReference type="KEGG" id="pmt:PMT_0738"/>
<dbReference type="eggNOG" id="COG0072">
    <property type="taxonomic scope" value="Bacteria"/>
</dbReference>
<dbReference type="eggNOG" id="COG0073">
    <property type="taxonomic scope" value="Bacteria"/>
</dbReference>
<dbReference type="HOGENOM" id="CLU_016891_0_0_3"/>
<dbReference type="OrthoDB" id="9805455at2"/>
<dbReference type="Proteomes" id="UP000001423">
    <property type="component" value="Chromosome"/>
</dbReference>
<dbReference type="GO" id="GO:0009328">
    <property type="term" value="C:phenylalanine-tRNA ligase complex"/>
    <property type="evidence" value="ECO:0007669"/>
    <property type="project" value="TreeGrafter"/>
</dbReference>
<dbReference type="GO" id="GO:0005524">
    <property type="term" value="F:ATP binding"/>
    <property type="evidence" value="ECO:0007669"/>
    <property type="project" value="UniProtKB-UniRule"/>
</dbReference>
<dbReference type="GO" id="GO:0000287">
    <property type="term" value="F:magnesium ion binding"/>
    <property type="evidence" value="ECO:0007669"/>
    <property type="project" value="UniProtKB-UniRule"/>
</dbReference>
<dbReference type="GO" id="GO:0004826">
    <property type="term" value="F:phenylalanine-tRNA ligase activity"/>
    <property type="evidence" value="ECO:0007669"/>
    <property type="project" value="UniProtKB-UniRule"/>
</dbReference>
<dbReference type="GO" id="GO:0000049">
    <property type="term" value="F:tRNA binding"/>
    <property type="evidence" value="ECO:0007669"/>
    <property type="project" value="UniProtKB-KW"/>
</dbReference>
<dbReference type="GO" id="GO:0006432">
    <property type="term" value="P:phenylalanyl-tRNA aminoacylation"/>
    <property type="evidence" value="ECO:0007669"/>
    <property type="project" value="UniProtKB-UniRule"/>
</dbReference>
<dbReference type="CDD" id="cd00769">
    <property type="entry name" value="PheRS_beta_core"/>
    <property type="match status" value="1"/>
</dbReference>
<dbReference type="CDD" id="cd02796">
    <property type="entry name" value="tRNA_bind_bactPheRS"/>
    <property type="match status" value="1"/>
</dbReference>
<dbReference type="FunFam" id="2.40.50.140:FF:000045">
    <property type="entry name" value="Phenylalanine--tRNA ligase beta subunit"/>
    <property type="match status" value="1"/>
</dbReference>
<dbReference type="Gene3D" id="3.30.56.10">
    <property type="match status" value="2"/>
</dbReference>
<dbReference type="Gene3D" id="3.30.930.10">
    <property type="entry name" value="Bira Bifunctional Protein, Domain 2"/>
    <property type="match status" value="1"/>
</dbReference>
<dbReference type="Gene3D" id="3.30.70.380">
    <property type="entry name" value="Ferrodoxin-fold anticodon-binding domain"/>
    <property type="match status" value="1"/>
</dbReference>
<dbReference type="Gene3D" id="2.40.50.140">
    <property type="entry name" value="Nucleic acid-binding proteins"/>
    <property type="match status" value="1"/>
</dbReference>
<dbReference type="Gene3D" id="3.50.40.10">
    <property type="entry name" value="Phenylalanyl-trna Synthetase, Chain B, domain 3"/>
    <property type="match status" value="1"/>
</dbReference>
<dbReference type="HAMAP" id="MF_00283">
    <property type="entry name" value="Phe_tRNA_synth_beta1"/>
    <property type="match status" value="1"/>
</dbReference>
<dbReference type="InterPro" id="IPR045864">
    <property type="entry name" value="aa-tRNA-synth_II/BPL/LPL"/>
</dbReference>
<dbReference type="InterPro" id="IPR005146">
    <property type="entry name" value="B3/B4_tRNA-bd"/>
</dbReference>
<dbReference type="InterPro" id="IPR009061">
    <property type="entry name" value="DNA-bd_dom_put_sf"/>
</dbReference>
<dbReference type="InterPro" id="IPR005121">
    <property type="entry name" value="Fdx_antiC-bd"/>
</dbReference>
<dbReference type="InterPro" id="IPR036690">
    <property type="entry name" value="Fdx_antiC-bd_sf"/>
</dbReference>
<dbReference type="InterPro" id="IPR012340">
    <property type="entry name" value="NA-bd_OB-fold"/>
</dbReference>
<dbReference type="InterPro" id="IPR045060">
    <property type="entry name" value="Phe-tRNA-ligase_IIc_bsu"/>
</dbReference>
<dbReference type="InterPro" id="IPR004532">
    <property type="entry name" value="Phe-tRNA-ligase_IIc_bsu_bact"/>
</dbReference>
<dbReference type="InterPro" id="IPR020825">
    <property type="entry name" value="Phe-tRNA_synthase-like_B3/B4"/>
</dbReference>
<dbReference type="InterPro" id="IPR041616">
    <property type="entry name" value="PheRS_beta_core"/>
</dbReference>
<dbReference type="InterPro" id="IPR002547">
    <property type="entry name" value="tRNA-bd_dom"/>
</dbReference>
<dbReference type="InterPro" id="IPR033714">
    <property type="entry name" value="tRNA_bind_bactPheRS"/>
</dbReference>
<dbReference type="InterPro" id="IPR005147">
    <property type="entry name" value="tRNA_synthase_B5-dom"/>
</dbReference>
<dbReference type="NCBIfam" id="TIGR00472">
    <property type="entry name" value="pheT_bact"/>
    <property type="match status" value="1"/>
</dbReference>
<dbReference type="NCBIfam" id="NF045760">
    <property type="entry name" value="YtpR"/>
    <property type="match status" value="1"/>
</dbReference>
<dbReference type="PANTHER" id="PTHR10947:SF0">
    <property type="entry name" value="PHENYLALANINE--TRNA LIGASE BETA SUBUNIT"/>
    <property type="match status" value="1"/>
</dbReference>
<dbReference type="PANTHER" id="PTHR10947">
    <property type="entry name" value="PHENYLALANYL-TRNA SYNTHETASE BETA CHAIN AND LEUCINE-RICH REPEAT-CONTAINING PROTEIN 47"/>
    <property type="match status" value="1"/>
</dbReference>
<dbReference type="Pfam" id="PF03483">
    <property type="entry name" value="B3_4"/>
    <property type="match status" value="1"/>
</dbReference>
<dbReference type="Pfam" id="PF03484">
    <property type="entry name" value="B5"/>
    <property type="match status" value="1"/>
</dbReference>
<dbReference type="Pfam" id="PF03147">
    <property type="entry name" value="FDX-ACB"/>
    <property type="match status" value="1"/>
</dbReference>
<dbReference type="Pfam" id="PF01588">
    <property type="entry name" value="tRNA_bind"/>
    <property type="match status" value="1"/>
</dbReference>
<dbReference type="Pfam" id="PF17759">
    <property type="entry name" value="tRNA_synthFbeta"/>
    <property type="match status" value="1"/>
</dbReference>
<dbReference type="SMART" id="SM00873">
    <property type="entry name" value="B3_4"/>
    <property type="match status" value="1"/>
</dbReference>
<dbReference type="SMART" id="SM00874">
    <property type="entry name" value="B5"/>
    <property type="match status" value="1"/>
</dbReference>
<dbReference type="SMART" id="SM00896">
    <property type="entry name" value="FDX-ACB"/>
    <property type="match status" value="1"/>
</dbReference>
<dbReference type="SUPFAM" id="SSF54991">
    <property type="entry name" value="Anticodon-binding domain of PheRS"/>
    <property type="match status" value="1"/>
</dbReference>
<dbReference type="SUPFAM" id="SSF55681">
    <property type="entry name" value="Class II aaRS and biotin synthetases"/>
    <property type="match status" value="1"/>
</dbReference>
<dbReference type="SUPFAM" id="SSF50249">
    <property type="entry name" value="Nucleic acid-binding proteins"/>
    <property type="match status" value="1"/>
</dbReference>
<dbReference type="SUPFAM" id="SSF56037">
    <property type="entry name" value="PheT/TilS domain"/>
    <property type="match status" value="1"/>
</dbReference>
<dbReference type="SUPFAM" id="SSF46955">
    <property type="entry name" value="Putative DNA-binding domain"/>
    <property type="match status" value="1"/>
</dbReference>
<dbReference type="PROSITE" id="PS51483">
    <property type="entry name" value="B5"/>
    <property type="match status" value="1"/>
</dbReference>
<dbReference type="PROSITE" id="PS51447">
    <property type="entry name" value="FDX_ACB"/>
    <property type="match status" value="1"/>
</dbReference>
<dbReference type="PROSITE" id="PS50886">
    <property type="entry name" value="TRBD"/>
    <property type="match status" value="1"/>
</dbReference>
<reference key="1">
    <citation type="journal article" date="2003" name="Nature">
        <title>Genome divergence in two Prochlorococcus ecotypes reflects oceanic niche differentiation.</title>
        <authorList>
            <person name="Rocap G."/>
            <person name="Larimer F.W."/>
            <person name="Lamerdin J.E."/>
            <person name="Malfatti S."/>
            <person name="Chain P."/>
            <person name="Ahlgren N.A."/>
            <person name="Arellano A."/>
            <person name="Coleman M."/>
            <person name="Hauser L."/>
            <person name="Hess W.R."/>
            <person name="Johnson Z.I."/>
            <person name="Land M.L."/>
            <person name="Lindell D."/>
            <person name="Post A.F."/>
            <person name="Regala W."/>
            <person name="Shah M."/>
            <person name="Shaw S.L."/>
            <person name="Steglich C."/>
            <person name="Sullivan M.B."/>
            <person name="Ting C.S."/>
            <person name="Tolonen A."/>
            <person name="Webb E.A."/>
            <person name="Zinser E.R."/>
            <person name="Chisholm S.W."/>
        </authorList>
    </citation>
    <scope>NUCLEOTIDE SEQUENCE [LARGE SCALE GENOMIC DNA]</scope>
    <source>
        <strain>MIT 9313</strain>
    </source>
</reference>
<keyword id="KW-0030">Aminoacyl-tRNA synthetase</keyword>
<keyword id="KW-0067">ATP-binding</keyword>
<keyword id="KW-0963">Cytoplasm</keyword>
<keyword id="KW-0436">Ligase</keyword>
<keyword id="KW-0460">Magnesium</keyword>
<keyword id="KW-0479">Metal-binding</keyword>
<keyword id="KW-0547">Nucleotide-binding</keyword>
<keyword id="KW-0648">Protein biosynthesis</keyword>
<keyword id="KW-1185">Reference proteome</keyword>
<keyword id="KW-0694">RNA-binding</keyword>
<keyword id="KW-0820">tRNA-binding</keyword>
<protein>
    <recommendedName>
        <fullName evidence="1">Phenylalanine--tRNA ligase beta subunit</fullName>
        <ecNumber evidence="1">6.1.1.20</ecNumber>
    </recommendedName>
    <alternativeName>
        <fullName evidence="1">Phenylalanyl-tRNA synthetase beta subunit</fullName>
        <shortName evidence="1">PheRS</shortName>
    </alternativeName>
</protein>
<organism>
    <name type="scientific">Prochlorococcus marinus (strain MIT 9313)</name>
    <dbReference type="NCBI Taxonomy" id="74547"/>
    <lineage>
        <taxon>Bacteria</taxon>
        <taxon>Bacillati</taxon>
        <taxon>Cyanobacteriota</taxon>
        <taxon>Cyanophyceae</taxon>
        <taxon>Synechococcales</taxon>
        <taxon>Prochlorococcaceae</taxon>
        <taxon>Prochlorococcus</taxon>
    </lineage>
</organism>
<accession>Q7V7K5</accession>
<sequence length="815" mass="88974">MRVPLSWLQDLVQLNETVEILAEGLSMAGFEVEAIDDLASHAQGVVVGLVKDHQPHPNADKLSVCQVDVGSGEGLQIVCGAPNVRIGIHVPVAMVGATLPAVGIKIKASELRGVPSQGMICSLAELGLESNGNGIAILEEIAENVPDLGQPVGPLLGLDDTVLELAITANRPDGMSMVGIAREVAALTGASLQLPQLDMAPIHKSFEPDSTSSASMLKGGLYGLTALENVDGELTSPAWLKQRLERSGCKSVNGVVDITNLVMLEQGQPLHAFDIDALEMITGQTVSAESFGLRQARNNELFNGLDGHQLQLNENCQIVTCHDIPIALAGVMGSAESGVSAKTRRVWLESAMFTPTAVRTTCRAVGLRTDASSRFEKGLPVEMTLASARRAVTLMEEHLGIKSNGCWVYGESPKSAEPVKLRREAIHRLLGPIGVENDNRYLEDDIIETSLLALGCELSPYNEGWLVIVPPSRRRDLSREVDLIEEVSRLVGFDRFEANLPDPLEPGGLTTAQTAERLLRQMLCGAGLQEVTTLSLVGADSDEPQRIAISNPLLAETSHLRTNLWEEHLRICQRNLQSSQPGCWLYEIGNVYTVTDELINQRAVLGGVICAERSFERWSTSGKIKSMTYHQARGQLSQVFQGLKLDINDRPLKDNHSLHPGRSAELFVEGKLLGDFGQLHPALSERLDLPEATYLFALDLQCIIQAATRSNRWNPTFRPFPTVPAMELDLAVIVSKECSCSDLIQAIRKAGKPLLEHVELIDRFEGGQLDPYSCSQAFRLRYRSKDRTLSEDKVNPIHEKVRQALVKQFSAELRS</sequence>
<name>SYFB_PROMM</name>
<comment type="catalytic activity">
    <reaction evidence="1">
        <text>tRNA(Phe) + L-phenylalanine + ATP = L-phenylalanyl-tRNA(Phe) + AMP + diphosphate + H(+)</text>
        <dbReference type="Rhea" id="RHEA:19413"/>
        <dbReference type="Rhea" id="RHEA-COMP:9668"/>
        <dbReference type="Rhea" id="RHEA-COMP:9699"/>
        <dbReference type="ChEBI" id="CHEBI:15378"/>
        <dbReference type="ChEBI" id="CHEBI:30616"/>
        <dbReference type="ChEBI" id="CHEBI:33019"/>
        <dbReference type="ChEBI" id="CHEBI:58095"/>
        <dbReference type="ChEBI" id="CHEBI:78442"/>
        <dbReference type="ChEBI" id="CHEBI:78531"/>
        <dbReference type="ChEBI" id="CHEBI:456215"/>
        <dbReference type="EC" id="6.1.1.20"/>
    </reaction>
</comment>
<comment type="cofactor">
    <cofactor evidence="1">
        <name>Mg(2+)</name>
        <dbReference type="ChEBI" id="CHEBI:18420"/>
    </cofactor>
    <text evidence="1">Binds 2 magnesium ions per tetramer.</text>
</comment>
<comment type="subunit">
    <text evidence="1">Tetramer of two alpha and two beta subunits.</text>
</comment>
<comment type="subcellular location">
    <subcellularLocation>
        <location evidence="1">Cytoplasm</location>
    </subcellularLocation>
</comment>
<comment type="similarity">
    <text evidence="1">Belongs to the phenylalanyl-tRNA synthetase beta subunit family. Type 1 subfamily.</text>
</comment>
<evidence type="ECO:0000255" key="1">
    <source>
        <dbReference type="HAMAP-Rule" id="MF_00283"/>
    </source>
</evidence>
<proteinExistence type="inferred from homology"/>
<feature type="chain" id="PRO_0000126930" description="Phenylalanine--tRNA ligase beta subunit">
    <location>
        <begin position="1"/>
        <end position="815"/>
    </location>
</feature>
<feature type="domain" description="tRNA-binding" evidence="1">
    <location>
        <begin position="39"/>
        <end position="153"/>
    </location>
</feature>
<feature type="domain" description="B5" evidence="1">
    <location>
        <begin position="414"/>
        <end position="498"/>
    </location>
</feature>
<feature type="domain" description="FDX-ACB" evidence="1">
    <location>
        <begin position="721"/>
        <end position="814"/>
    </location>
</feature>
<feature type="binding site" evidence="1">
    <location>
        <position position="476"/>
    </location>
    <ligand>
        <name>Mg(2+)</name>
        <dbReference type="ChEBI" id="CHEBI:18420"/>
        <note>shared with alpha subunit</note>
    </ligand>
</feature>
<feature type="binding site" evidence="1">
    <location>
        <position position="482"/>
    </location>
    <ligand>
        <name>Mg(2+)</name>
        <dbReference type="ChEBI" id="CHEBI:18420"/>
        <note>shared with alpha subunit</note>
    </ligand>
</feature>
<feature type="binding site" evidence="1">
    <location>
        <position position="485"/>
    </location>
    <ligand>
        <name>Mg(2+)</name>
        <dbReference type="ChEBI" id="CHEBI:18420"/>
        <note>shared with alpha subunit</note>
    </ligand>
</feature>
<feature type="binding site" evidence="1">
    <location>
        <position position="486"/>
    </location>
    <ligand>
        <name>Mg(2+)</name>
        <dbReference type="ChEBI" id="CHEBI:18420"/>
        <note>shared with alpha subunit</note>
    </ligand>
</feature>
<gene>
    <name evidence="1" type="primary">pheT</name>
    <name type="ordered locus">PMT_0738</name>
</gene>